<evidence type="ECO:0000255" key="1"/>
<evidence type="ECO:0000269" key="2">
    <source>
    </source>
</evidence>
<evidence type="ECO:0000303" key="3">
    <source>
    </source>
</evidence>
<evidence type="ECO:0000305" key="4"/>
<sequence>GSSGMIPFPRV</sequence>
<protein>
    <recommendedName>
        <fullName evidence="3">Periviscerokinin-3</fullName>
        <shortName evidence="3">LaxSp-PVK-3</shortName>
    </recommendedName>
</protein>
<feature type="peptide" id="PRO_0000378837" description="Periviscerokinin-3" evidence="2">
    <location>
        <begin position="1"/>
        <end position="11"/>
    </location>
</feature>
<feature type="modified residue" description="Valine amide" evidence="2">
    <location>
        <position position="11"/>
    </location>
</feature>
<keyword id="KW-0027">Amidation</keyword>
<keyword id="KW-0903">Direct protein sequencing</keyword>
<keyword id="KW-0527">Neuropeptide</keyword>
<keyword id="KW-0964">Secreted</keyword>
<comment type="function">
    <text evidence="4">Mediates visceral muscle contractile activity (myotropic activity).</text>
</comment>
<comment type="subcellular location">
    <subcellularLocation>
        <location evidence="4">Secreted</location>
    </subcellularLocation>
</comment>
<comment type="similarity">
    <text evidence="1">Belongs to the periviscerokinin family.</text>
</comment>
<reference evidence="4" key="1">
    <citation type="journal article" date="2009" name="BMC Evol. Biol.">
        <title>A proteomic approach for studying insect phylogeny: CAPA peptides of ancient insect taxa (Dictyoptera, Blattoptera) as a test case.</title>
        <authorList>
            <person name="Roth S."/>
            <person name="Fromm B."/>
            <person name="Gaede G."/>
            <person name="Predel R."/>
        </authorList>
    </citation>
    <scope>PROTEIN SEQUENCE</scope>
    <scope>AMIDATION AT VAL-11</scope>
    <source>
        <tissue evidence="2">Abdominal perisympathetic organs</tissue>
    </source>
</reference>
<dbReference type="GO" id="GO:0005576">
    <property type="term" value="C:extracellular region"/>
    <property type="evidence" value="ECO:0007669"/>
    <property type="project" value="UniProtKB-SubCell"/>
</dbReference>
<dbReference type="GO" id="GO:0007218">
    <property type="term" value="P:neuropeptide signaling pathway"/>
    <property type="evidence" value="ECO:0007669"/>
    <property type="project" value="UniProtKB-KW"/>
</dbReference>
<dbReference type="InterPro" id="IPR013231">
    <property type="entry name" value="Periviscerokinin"/>
</dbReference>
<dbReference type="Pfam" id="PF08259">
    <property type="entry name" value="Periviscerokin"/>
    <property type="match status" value="1"/>
</dbReference>
<proteinExistence type="evidence at protein level"/>
<organism>
    <name type="scientific">Laxta sp. (strain SR-2005)</name>
    <name type="common">Cockroach</name>
    <dbReference type="NCBI Taxonomy" id="348757"/>
    <lineage>
        <taxon>Eukaryota</taxon>
        <taxon>Metazoa</taxon>
        <taxon>Ecdysozoa</taxon>
        <taxon>Arthropoda</taxon>
        <taxon>Hexapoda</taxon>
        <taxon>Insecta</taxon>
        <taxon>Pterygota</taxon>
        <taxon>Neoptera</taxon>
        <taxon>Polyneoptera</taxon>
        <taxon>Dictyoptera</taxon>
        <taxon>Blattodea</taxon>
        <taxon>Blaberoidea</taxon>
        <taxon>Blaberidae</taxon>
        <taxon>Perisphaerinae</taxon>
        <taxon>Laxta</taxon>
    </lineage>
</organism>
<accession>P85655</accession>
<name>PVK3_LAXSS</name>